<feature type="chain" id="PRO_0000236677" description="Phosphoribosylformylglycinamidine synthase subunit PurL">
    <location>
        <begin position="1"/>
        <end position="713"/>
    </location>
</feature>
<feature type="region of interest" description="Disordered" evidence="2">
    <location>
        <begin position="1"/>
        <end position="20"/>
    </location>
</feature>
<feature type="compositionally biased region" description="Basic and acidic residues" evidence="2">
    <location>
        <begin position="1"/>
        <end position="17"/>
    </location>
</feature>
<feature type="active site" evidence="1">
    <location>
        <position position="34"/>
    </location>
</feature>
<feature type="active site" description="Proton acceptor" evidence="1">
    <location>
        <position position="87"/>
    </location>
</feature>
<feature type="binding site" evidence="1">
    <location>
        <position position="37"/>
    </location>
    <ligand>
        <name>ATP</name>
        <dbReference type="ChEBI" id="CHEBI:30616"/>
    </ligand>
</feature>
<feature type="binding site" evidence="1">
    <location>
        <position position="85"/>
    </location>
    <ligand>
        <name>Mg(2+)</name>
        <dbReference type="ChEBI" id="CHEBI:18420"/>
        <label>1</label>
    </ligand>
</feature>
<feature type="binding site" evidence="1">
    <location>
        <begin position="86"/>
        <end position="89"/>
    </location>
    <ligand>
        <name>substrate</name>
    </ligand>
</feature>
<feature type="binding site" evidence="1">
    <location>
        <position position="108"/>
    </location>
    <ligand>
        <name>substrate</name>
    </ligand>
</feature>
<feature type="binding site" evidence="1">
    <location>
        <position position="109"/>
    </location>
    <ligand>
        <name>Mg(2+)</name>
        <dbReference type="ChEBI" id="CHEBI:18420"/>
        <label>2</label>
    </ligand>
</feature>
<feature type="binding site" evidence="1">
    <location>
        <position position="233"/>
    </location>
    <ligand>
        <name>substrate</name>
    </ligand>
</feature>
<feature type="binding site" evidence="1">
    <location>
        <position position="261"/>
    </location>
    <ligand>
        <name>Mg(2+)</name>
        <dbReference type="ChEBI" id="CHEBI:18420"/>
        <label>2</label>
    </ligand>
</feature>
<feature type="binding site" evidence="1">
    <location>
        <begin position="305"/>
        <end position="307"/>
    </location>
    <ligand>
        <name>substrate</name>
    </ligand>
</feature>
<feature type="binding site" evidence="1">
    <location>
        <position position="480"/>
    </location>
    <ligand>
        <name>ATP</name>
        <dbReference type="ChEBI" id="CHEBI:30616"/>
    </ligand>
</feature>
<feature type="binding site" evidence="1">
    <location>
        <position position="517"/>
    </location>
    <ligand>
        <name>ATP</name>
        <dbReference type="ChEBI" id="CHEBI:30616"/>
    </ligand>
</feature>
<feature type="binding site" evidence="1">
    <location>
        <position position="518"/>
    </location>
    <ligand>
        <name>Mg(2+)</name>
        <dbReference type="ChEBI" id="CHEBI:18420"/>
        <label>1</label>
    </ligand>
</feature>
<feature type="binding site" evidence="1">
    <location>
        <position position="520"/>
    </location>
    <ligand>
        <name>substrate</name>
    </ligand>
</feature>
<reference key="1">
    <citation type="journal article" date="2005" name="Genome Res.">
        <title>Living with two extremes: conclusions from the genome sequence of Natronomonas pharaonis.</title>
        <authorList>
            <person name="Falb M."/>
            <person name="Pfeiffer F."/>
            <person name="Palm P."/>
            <person name="Rodewald K."/>
            <person name="Hickmann V."/>
            <person name="Tittor J."/>
            <person name="Oesterhelt D."/>
        </authorList>
    </citation>
    <scope>NUCLEOTIDE SEQUENCE [LARGE SCALE GENOMIC DNA]</scope>
    <source>
        <strain>ATCC 35678 / DSM 2160 / CIP 103997 / JCM 8858 / NBRC 14720 / NCIMB 2260 / Gabara</strain>
    </source>
</reference>
<protein>
    <recommendedName>
        <fullName evidence="1">Phosphoribosylformylglycinamidine synthase subunit PurL</fullName>
        <shortName evidence="1">FGAM synthase</shortName>
        <ecNumber evidence="1">6.3.5.3</ecNumber>
    </recommendedName>
    <alternativeName>
        <fullName evidence="1">Formylglycinamide ribonucleotide amidotransferase subunit II</fullName>
        <shortName evidence="1">FGAR amidotransferase II</shortName>
        <shortName evidence="1">FGAR-AT II</shortName>
    </alternativeName>
    <alternativeName>
        <fullName evidence="1">Glutamine amidotransferase PurL</fullName>
    </alternativeName>
    <alternativeName>
        <fullName evidence="1">Phosphoribosylformylglycinamidine synthase subunit II</fullName>
    </alternativeName>
</protein>
<dbReference type="EC" id="6.3.5.3" evidence="1"/>
<dbReference type="EMBL" id="CR936257">
    <property type="protein sequence ID" value="CAI49582.1"/>
    <property type="molecule type" value="Genomic_DNA"/>
</dbReference>
<dbReference type="RefSeq" id="WP_011323206.1">
    <property type="nucleotide sequence ID" value="NC_007426.1"/>
</dbReference>
<dbReference type="SMR" id="Q3IQL3"/>
<dbReference type="STRING" id="348780.NP_2982A"/>
<dbReference type="EnsemblBacteria" id="CAI49582">
    <property type="protein sequence ID" value="CAI49582"/>
    <property type="gene ID" value="NP_2982A"/>
</dbReference>
<dbReference type="GeneID" id="3703073"/>
<dbReference type="KEGG" id="nph:NP_2982A"/>
<dbReference type="eggNOG" id="arCOG00641">
    <property type="taxonomic scope" value="Archaea"/>
</dbReference>
<dbReference type="HOGENOM" id="CLU_003100_0_1_2"/>
<dbReference type="OrthoDB" id="8251at2157"/>
<dbReference type="UniPathway" id="UPA00074">
    <property type="reaction ID" value="UER00128"/>
</dbReference>
<dbReference type="Proteomes" id="UP000002698">
    <property type="component" value="Chromosome"/>
</dbReference>
<dbReference type="GO" id="GO:0005737">
    <property type="term" value="C:cytoplasm"/>
    <property type="evidence" value="ECO:0007669"/>
    <property type="project" value="UniProtKB-SubCell"/>
</dbReference>
<dbReference type="GO" id="GO:0005524">
    <property type="term" value="F:ATP binding"/>
    <property type="evidence" value="ECO:0007669"/>
    <property type="project" value="UniProtKB-UniRule"/>
</dbReference>
<dbReference type="GO" id="GO:0000287">
    <property type="term" value="F:magnesium ion binding"/>
    <property type="evidence" value="ECO:0007669"/>
    <property type="project" value="UniProtKB-UniRule"/>
</dbReference>
<dbReference type="GO" id="GO:0004642">
    <property type="term" value="F:phosphoribosylformylglycinamidine synthase activity"/>
    <property type="evidence" value="ECO:0007669"/>
    <property type="project" value="UniProtKB-UniRule"/>
</dbReference>
<dbReference type="GO" id="GO:0006189">
    <property type="term" value="P:'de novo' IMP biosynthetic process"/>
    <property type="evidence" value="ECO:0007669"/>
    <property type="project" value="UniProtKB-UniRule"/>
</dbReference>
<dbReference type="CDD" id="cd02203">
    <property type="entry name" value="PurL_repeat1"/>
    <property type="match status" value="1"/>
</dbReference>
<dbReference type="CDD" id="cd02204">
    <property type="entry name" value="PurL_repeat2"/>
    <property type="match status" value="1"/>
</dbReference>
<dbReference type="Gene3D" id="3.90.650.10">
    <property type="entry name" value="PurM-like C-terminal domain"/>
    <property type="match status" value="2"/>
</dbReference>
<dbReference type="Gene3D" id="3.30.1330.10">
    <property type="entry name" value="PurM-like, N-terminal domain"/>
    <property type="match status" value="2"/>
</dbReference>
<dbReference type="HAMAP" id="MF_00420">
    <property type="entry name" value="PurL_2"/>
    <property type="match status" value="1"/>
</dbReference>
<dbReference type="InterPro" id="IPR010074">
    <property type="entry name" value="PRibForGlyAmidine_synth_PurL"/>
</dbReference>
<dbReference type="InterPro" id="IPR041609">
    <property type="entry name" value="PurL_linker"/>
</dbReference>
<dbReference type="InterPro" id="IPR010918">
    <property type="entry name" value="PurM-like_C_dom"/>
</dbReference>
<dbReference type="InterPro" id="IPR036676">
    <property type="entry name" value="PurM-like_C_sf"/>
</dbReference>
<dbReference type="InterPro" id="IPR016188">
    <property type="entry name" value="PurM-like_N"/>
</dbReference>
<dbReference type="InterPro" id="IPR036921">
    <property type="entry name" value="PurM-like_N_sf"/>
</dbReference>
<dbReference type="NCBIfam" id="TIGR01736">
    <property type="entry name" value="FGAM_synth_II"/>
    <property type="match status" value="1"/>
</dbReference>
<dbReference type="NCBIfam" id="NF002290">
    <property type="entry name" value="PRK01213.1"/>
    <property type="match status" value="1"/>
</dbReference>
<dbReference type="PANTHER" id="PTHR43555">
    <property type="entry name" value="PHOSPHORIBOSYLFORMYLGLYCINAMIDINE SYNTHASE SUBUNIT PURL"/>
    <property type="match status" value="1"/>
</dbReference>
<dbReference type="PANTHER" id="PTHR43555:SF1">
    <property type="entry name" value="PHOSPHORIBOSYLFORMYLGLYCINAMIDINE SYNTHASE SUBUNIT PURL"/>
    <property type="match status" value="1"/>
</dbReference>
<dbReference type="Pfam" id="PF00586">
    <property type="entry name" value="AIRS"/>
    <property type="match status" value="2"/>
</dbReference>
<dbReference type="Pfam" id="PF02769">
    <property type="entry name" value="AIRS_C"/>
    <property type="match status" value="2"/>
</dbReference>
<dbReference type="Pfam" id="PF18072">
    <property type="entry name" value="FGAR-AT_linker"/>
    <property type="match status" value="1"/>
</dbReference>
<dbReference type="PIRSF" id="PIRSF001587">
    <property type="entry name" value="FGAM_synthase_II"/>
    <property type="match status" value="1"/>
</dbReference>
<dbReference type="SUPFAM" id="SSF56042">
    <property type="entry name" value="PurM C-terminal domain-like"/>
    <property type="match status" value="2"/>
</dbReference>
<dbReference type="SUPFAM" id="SSF55326">
    <property type="entry name" value="PurM N-terminal domain-like"/>
    <property type="match status" value="2"/>
</dbReference>
<accession>Q3IQL3</accession>
<evidence type="ECO:0000255" key="1">
    <source>
        <dbReference type="HAMAP-Rule" id="MF_00420"/>
    </source>
</evidence>
<evidence type="ECO:0000256" key="2">
    <source>
        <dbReference type="SAM" id="MobiDB-lite"/>
    </source>
</evidence>
<keyword id="KW-0067">ATP-binding</keyword>
<keyword id="KW-0963">Cytoplasm</keyword>
<keyword id="KW-0436">Ligase</keyword>
<keyword id="KW-0460">Magnesium</keyword>
<keyword id="KW-0479">Metal-binding</keyword>
<keyword id="KW-0547">Nucleotide-binding</keyword>
<keyword id="KW-0658">Purine biosynthesis</keyword>
<keyword id="KW-1185">Reference proteome</keyword>
<name>PURL_NATPD</name>
<sequence length="713" mass="74250">MSLSPSDRELVTEELGREPTPAEEALFENLWSEHCAYRSSQPLLSAFESEGDRVVVGPGDDAAVVALPDPETGENSDTYITMGIESHNHPSYVDPFDGAATGVGGIVRDTMSMGAYPIALADSLYFGDFDREHSKYLFEGVVEGISHYGNCIGVPTVTGSVAFHDDYEGNPLVNVACVGLTDDERLVTAEAQTPGNKLVLFGNATGRDGLGGASFASEDLDEDAETEDRPAVQVGDPYAEKRLIEANEELVDDSLVRAARDLGAAGLGGASSELVAKGGLGAHIELDRVHQREPNMNALEILLAESQERMCYEVRPEDVDAVAAVADKYDLGCSVIGDVTDGNYVCTFDGETVVDCDAEYLADGAPMNDLDHVEPTQPDRDRPSPDLETAFEAVVAAPNTASKEWVYRQYDHEVGTRTALKPGDDAALMAVREAGVGLAFSSGADPNWTDTAPYDGARAVALENATNIAAKGALPLAAVDCLNGGNPEKPDVYGGFRGIVNGLADMCSTLDVPVVGGNVSLYNDSPSGPIPPTPTLAMTGTKPGYDAPPAALSGDGDLLVVGDGGDLELGGSELLAQFGGSDQFPALPDSPAAFIEAVADIADLDSTHATHDVSHGGLAVALAELVGDAGADVDLAGSPDALSVLFSEAVGRVVVETTDPEAVKERLDGVAPVEHIGHATDSGRLELSVGDETLSYSAADIASLRSVIGETLE</sequence>
<gene>
    <name evidence="1" type="primary">purL</name>
    <name type="ordered locus">NP_2982A</name>
</gene>
<proteinExistence type="inferred from homology"/>
<organism>
    <name type="scientific">Natronomonas pharaonis (strain ATCC 35678 / DSM 2160 / CIP 103997 / JCM 8858 / NBRC 14720 / NCIMB 2260 / Gabara)</name>
    <name type="common">Halobacterium pharaonis</name>
    <dbReference type="NCBI Taxonomy" id="348780"/>
    <lineage>
        <taxon>Archaea</taxon>
        <taxon>Methanobacteriati</taxon>
        <taxon>Methanobacteriota</taxon>
        <taxon>Stenosarchaea group</taxon>
        <taxon>Halobacteria</taxon>
        <taxon>Halobacteriales</taxon>
        <taxon>Haloarculaceae</taxon>
        <taxon>Natronomonas</taxon>
    </lineage>
</organism>
<comment type="function">
    <text evidence="1">Part of the phosphoribosylformylglycinamidine synthase complex involved in the purines biosynthetic pathway. Catalyzes the ATP-dependent conversion of formylglycinamide ribonucleotide (FGAR) and glutamine to yield formylglycinamidine ribonucleotide (FGAM) and glutamate. The FGAM synthase complex is composed of three subunits. PurQ produces an ammonia molecule by converting glutamine to glutamate. PurL transfers the ammonia molecule to FGAR to form FGAM in an ATP-dependent manner. PurS interacts with PurQ and PurL and is thought to assist in the transfer of the ammonia molecule from PurQ to PurL.</text>
</comment>
<comment type="catalytic activity">
    <reaction evidence="1">
        <text>N(2)-formyl-N(1)-(5-phospho-beta-D-ribosyl)glycinamide + L-glutamine + ATP + H2O = 2-formamido-N(1)-(5-O-phospho-beta-D-ribosyl)acetamidine + L-glutamate + ADP + phosphate + H(+)</text>
        <dbReference type="Rhea" id="RHEA:17129"/>
        <dbReference type="ChEBI" id="CHEBI:15377"/>
        <dbReference type="ChEBI" id="CHEBI:15378"/>
        <dbReference type="ChEBI" id="CHEBI:29985"/>
        <dbReference type="ChEBI" id="CHEBI:30616"/>
        <dbReference type="ChEBI" id="CHEBI:43474"/>
        <dbReference type="ChEBI" id="CHEBI:58359"/>
        <dbReference type="ChEBI" id="CHEBI:147286"/>
        <dbReference type="ChEBI" id="CHEBI:147287"/>
        <dbReference type="ChEBI" id="CHEBI:456216"/>
        <dbReference type="EC" id="6.3.5.3"/>
    </reaction>
</comment>
<comment type="pathway">
    <text evidence="1">Purine metabolism; IMP biosynthesis via de novo pathway; 5-amino-1-(5-phospho-D-ribosyl)imidazole from N(2)-formyl-N(1)-(5-phospho-D-ribosyl)glycinamide: step 1/2.</text>
</comment>
<comment type="subunit">
    <text evidence="1">Monomer. Part of the FGAM synthase complex composed of 1 PurL, 1 PurQ and 2 PurS subunits.</text>
</comment>
<comment type="subcellular location">
    <subcellularLocation>
        <location evidence="1">Cytoplasm</location>
    </subcellularLocation>
</comment>
<comment type="similarity">
    <text evidence="1">Belongs to the FGAMS family.</text>
</comment>